<gene>
    <name type="primary">rocR</name>
    <name type="ordered locus">BSU40350</name>
</gene>
<keyword id="KW-0010">Activator</keyword>
<keyword id="KW-0056">Arginine metabolism</keyword>
<keyword id="KW-0067">ATP-binding</keyword>
<keyword id="KW-0238">DNA-binding</keyword>
<keyword id="KW-0547">Nucleotide-binding</keyword>
<keyword id="KW-0597">Phosphoprotein</keyword>
<keyword id="KW-1185">Reference proteome</keyword>
<keyword id="KW-0804">Transcription</keyword>
<keyword id="KW-0805">Transcription regulation</keyword>
<keyword id="KW-0902">Two-component regulatory system</keyword>
<protein>
    <recommendedName>
        <fullName>Transcriptional activator RocR</fullName>
    </recommendedName>
    <alternativeName>
        <fullName>Arginine utilization regulatory protein RocR</fullName>
    </alternativeName>
</protein>
<organism>
    <name type="scientific">Bacillus subtilis (strain 168)</name>
    <dbReference type="NCBI Taxonomy" id="224308"/>
    <lineage>
        <taxon>Bacteria</taxon>
        <taxon>Bacillati</taxon>
        <taxon>Bacillota</taxon>
        <taxon>Bacilli</taxon>
        <taxon>Bacillales</taxon>
        <taxon>Bacillaceae</taxon>
        <taxon>Bacillus</taxon>
    </lineage>
</organism>
<comment type="function">
    <text evidence="3">Positive regulator of arginine catabolism. Controls the transcription of the two operons rocABC and rocDEF and probably acts by binding to the corresponding upstream activating sequences.</text>
</comment>
<comment type="induction">
    <text evidence="3">Not induced by arginine, repressed by RocR itself.</text>
</comment>
<comment type="disruption phenotype">
    <text evidence="4">Cells lacking this gene do not grow in presence of arginine as sole nitrogen source.</text>
</comment>
<evidence type="ECO:0000250" key="1"/>
<evidence type="ECO:0000255" key="2">
    <source>
        <dbReference type="PROSITE-ProRule" id="PRU00193"/>
    </source>
</evidence>
<evidence type="ECO:0000269" key="3">
    <source>
    </source>
</evidence>
<evidence type="ECO:0000269" key="4">
    <source>
    </source>
</evidence>
<evidence type="ECO:0000305" key="5"/>
<accession>P38022</accession>
<proteinExistence type="evidence at protein level"/>
<name>ROCR_BACSU</name>
<sequence length="461" mass="52177">MVKDSEFLTLVFQSILDEIDVGLHVVDEHGNTIVYNNKMMQIEDMEKHDVLNKNLMDVFMFSKQQDSTLVQALQEGKTIKNVKQSYFNNKGQEITTINHTYPIVQDGKIRGAVEIAKDVTKLERLIRENMNKKGSTTYTFDSILGTSPAIQDVIENAKRATRTSSSVLLAGETGTGKELFAQSIHNGSDRSGGPFISQNCAALPDSLVESILFGTKKGAFTGAVDQPGLFEQAHGGTLLLDEINSLNLSLQAKLLRALQERKIRRIGSTKDTPIDVRIIATMNEDPIDAIAGERMRKDLYYRLSVVTLIIPPLRERKEDILLLASEFIQKNNHLFQMNVEHISDDVKQFFLSYDWPGNIRELEHMIEGAMNFMTDEQTITASHLPYQYRMKIKPADIPEPETPRHQPAADLKEKMESFEKYVIENVLRKHGHNISKAAQELGISRQSLQYRLKKFSHSSNE</sequence>
<feature type="chain" id="PRO_0000081218" description="Transcriptional activator RocR">
    <location>
        <begin position="1"/>
        <end position="461"/>
    </location>
</feature>
<feature type="domain" description="Sigma-54 factor interaction" evidence="2">
    <location>
        <begin position="143"/>
        <end position="372"/>
    </location>
</feature>
<feature type="DNA-binding region" description="H-T-H motif" evidence="1">
    <location>
        <begin position="434"/>
        <end position="453"/>
    </location>
</feature>
<feature type="binding site" evidence="2">
    <location>
        <begin position="171"/>
        <end position="178"/>
    </location>
    <ligand>
        <name>ATP</name>
        <dbReference type="ChEBI" id="CHEBI:30616"/>
    </ligand>
</feature>
<feature type="binding site" evidence="2">
    <location>
        <begin position="233"/>
        <end position="242"/>
    </location>
    <ligand>
        <name>ATP</name>
        <dbReference type="ChEBI" id="CHEBI:30616"/>
    </ligand>
</feature>
<feature type="modified residue" description="4-aspartylphosphate" evidence="1">
    <location>
        <position position="57"/>
    </location>
</feature>
<feature type="sequence conflict" description="In Ref. 1; AAA19792." evidence="5" ref="1">
    <original>NA</original>
    <variation>KP</variation>
    <location>
        <begin position="156"/>
        <end position="157"/>
    </location>
</feature>
<reference key="1">
    <citation type="journal article" date="1994" name="J. Bacteriol.">
        <title>RocR, a novel regulatory protein controlling arginine utilization in Bacillus subtilis, belongs to the NtrC/NifA family of transcriptional activators.</title>
        <authorList>
            <person name="Calogero S."/>
            <person name="Gardan R."/>
            <person name="Glaser P."/>
            <person name="Schweitzer J."/>
            <person name="Rapoport G."/>
            <person name="Debarbouille M."/>
        </authorList>
    </citation>
    <scope>NUCLEOTIDE SEQUENCE [GENOMIC DNA]</scope>
    <scope>DISRUPTION PHENOTYPE</scope>
    <source>
        <strain>168 / Marburg / ATCC 6051 / DSM 10 / JCM 1465 / NBRC 13719 / NCIMB 3610 / NRRL NRS-744 / VKM B-501</strain>
    </source>
</reference>
<reference key="2">
    <citation type="journal article" date="1997" name="DNA Res.">
        <title>Sequence analysis of the 36-kb region between gntZ and trnY genes of Bacillus subtilis genome.</title>
        <authorList>
            <person name="Kasahara Y."/>
            <person name="Nakai S."/>
            <person name="Ogasawara N."/>
        </authorList>
    </citation>
    <scope>NUCLEOTIDE SEQUENCE [GENOMIC DNA]</scope>
    <source>
        <strain>168</strain>
    </source>
</reference>
<reference key="3">
    <citation type="journal article" date="1997" name="Nature">
        <title>The complete genome sequence of the Gram-positive bacterium Bacillus subtilis.</title>
        <authorList>
            <person name="Kunst F."/>
            <person name="Ogasawara N."/>
            <person name="Moszer I."/>
            <person name="Albertini A.M."/>
            <person name="Alloni G."/>
            <person name="Azevedo V."/>
            <person name="Bertero M.G."/>
            <person name="Bessieres P."/>
            <person name="Bolotin A."/>
            <person name="Borchert S."/>
            <person name="Borriss R."/>
            <person name="Boursier L."/>
            <person name="Brans A."/>
            <person name="Braun M."/>
            <person name="Brignell S.C."/>
            <person name="Bron S."/>
            <person name="Brouillet S."/>
            <person name="Bruschi C.V."/>
            <person name="Caldwell B."/>
            <person name="Capuano V."/>
            <person name="Carter N.M."/>
            <person name="Choi S.-K."/>
            <person name="Codani J.-J."/>
            <person name="Connerton I.F."/>
            <person name="Cummings N.J."/>
            <person name="Daniel R.A."/>
            <person name="Denizot F."/>
            <person name="Devine K.M."/>
            <person name="Duesterhoeft A."/>
            <person name="Ehrlich S.D."/>
            <person name="Emmerson P.T."/>
            <person name="Entian K.-D."/>
            <person name="Errington J."/>
            <person name="Fabret C."/>
            <person name="Ferrari E."/>
            <person name="Foulger D."/>
            <person name="Fritz C."/>
            <person name="Fujita M."/>
            <person name="Fujita Y."/>
            <person name="Fuma S."/>
            <person name="Galizzi A."/>
            <person name="Galleron N."/>
            <person name="Ghim S.-Y."/>
            <person name="Glaser P."/>
            <person name="Goffeau A."/>
            <person name="Golightly E.J."/>
            <person name="Grandi G."/>
            <person name="Guiseppi G."/>
            <person name="Guy B.J."/>
            <person name="Haga K."/>
            <person name="Haiech J."/>
            <person name="Harwood C.R."/>
            <person name="Henaut A."/>
            <person name="Hilbert H."/>
            <person name="Holsappel S."/>
            <person name="Hosono S."/>
            <person name="Hullo M.-F."/>
            <person name="Itaya M."/>
            <person name="Jones L.-M."/>
            <person name="Joris B."/>
            <person name="Karamata D."/>
            <person name="Kasahara Y."/>
            <person name="Klaerr-Blanchard M."/>
            <person name="Klein C."/>
            <person name="Kobayashi Y."/>
            <person name="Koetter P."/>
            <person name="Koningstein G."/>
            <person name="Krogh S."/>
            <person name="Kumano M."/>
            <person name="Kurita K."/>
            <person name="Lapidus A."/>
            <person name="Lardinois S."/>
            <person name="Lauber J."/>
            <person name="Lazarevic V."/>
            <person name="Lee S.-M."/>
            <person name="Levine A."/>
            <person name="Liu H."/>
            <person name="Masuda S."/>
            <person name="Mauel C."/>
            <person name="Medigue C."/>
            <person name="Medina N."/>
            <person name="Mellado R.P."/>
            <person name="Mizuno M."/>
            <person name="Moestl D."/>
            <person name="Nakai S."/>
            <person name="Noback M."/>
            <person name="Noone D."/>
            <person name="O'Reilly M."/>
            <person name="Ogawa K."/>
            <person name="Ogiwara A."/>
            <person name="Oudega B."/>
            <person name="Park S.-H."/>
            <person name="Parro V."/>
            <person name="Pohl T.M."/>
            <person name="Portetelle D."/>
            <person name="Porwollik S."/>
            <person name="Prescott A.M."/>
            <person name="Presecan E."/>
            <person name="Pujic P."/>
            <person name="Purnelle B."/>
            <person name="Rapoport G."/>
            <person name="Rey M."/>
            <person name="Reynolds S."/>
            <person name="Rieger M."/>
            <person name="Rivolta C."/>
            <person name="Rocha E."/>
            <person name="Roche B."/>
            <person name="Rose M."/>
            <person name="Sadaie Y."/>
            <person name="Sato T."/>
            <person name="Scanlan E."/>
            <person name="Schleich S."/>
            <person name="Schroeter R."/>
            <person name="Scoffone F."/>
            <person name="Sekiguchi J."/>
            <person name="Sekowska A."/>
            <person name="Seror S.J."/>
            <person name="Serror P."/>
            <person name="Shin B.-S."/>
            <person name="Soldo B."/>
            <person name="Sorokin A."/>
            <person name="Tacconi E."/>
            <person name="Takagi T."/>
            <person name="Takahashi H."/>
            <person name="Takemaru K."/>
            <person name="Takeuchi M."/>
            <person name="Tamakoshi A."/>
            <person name="Tanaka T."/>
            <person name="Terpstra P."/>
            <person name="Tognoni A."/>
            <person name="Tosato V."/>
            <person name="Uchiyama S."/>
            <person name="Vandenbol M."/>
            <person name="Vannier F."/>
            <person name="Vassarotti A."/>
            <person name="Viari A."/>
            <person name="Wambutt R."/>
            <person name="Wedler E."/>
            <person name="Wedler H."/>
            <person name="Weitzenegger T."/>
            <person name="Winters P."/>
            <person name="Wipat A."/>
            <person name="Yamamoto H."/>
            <person name="Yamane K."/>
            <person name="Yasumoto K."/>
            <person name="Yata K."/>
            <person name="Yoshida K."/>
            <person name="Yoshikawa H.-F."/>
            <person name="Zumstein E."/>
            <person name="Yoshikawa H."/>
            <person name="Danchin A."/>
        </authorList>
    </citation>
    <scope>NUCLEOTIDE SEQUENCE [LARGE SCALE GENOMIC DNA]</scope>
    <source>
        <strain>168</strain>
    </source>
</reference>
<reference key="4">
    <citation type="journal article" date="1995" name="J. Mol. Biol.">
        <title>Expression of the rocDEF operon involved in arginine catabolism in Bacillus subtilis.</title>
        <authorList>
            <person name="Gardan R."/>
            <person name="Rapoport G."/>
            <person name="Debarbouille M."/>
        </authorList>
    </citation>
    <scope>FUNCTION AS A REGULATOR</scope>
    <scope>INDUCTION</scope>
    <source>
        <strain>168</strain>
    </source>
</reference>
<dbReference type="EMBL" id="L22006">
    <property type="protein sequence ID" value="AAA19792.1"/>
    <property type="molecule type" value="Unassigned_DNA"/>
</dbReference>
<dbReference type="EMBL" id="D78193">
    <property type="protein sequence ID" value="BAA11294.1"/>
    <property type="molecule type" value="Genomic_DNA"/>
</dbReference>
<dbReference type="EMBL" id="AL009126">
    <property type="protein sequence ID" value="CAB16072.1"/>
    <property type="molecule type" value="Genomic_DNA"/>
</dbReference>
<dbReference type="PIR" id="A53370">
    <property type="entry name" value="A53370"/>
</dbReference>
<dbReference type="RefSeq" id="NP_391915.1">
    <property type="nucleotide sequence ID" value="NC_000964.3"/>
</dbReference>
<dbReference type="RefSeq" id="WP_003244510.1">
    <property type="nucleotide sequence ID" value="NZ_OZ025638.1"/>
</dbReference>
<dbReference type="SMR" id="P38022"/>
<dbReference type="FunCoup" id="P38022">
    <property type="interactions" value="112"/>
</dbReference>
<dbReference type="STRING" id="224308.BSU40350"/>
<dbReference type="PaxDb" id="224308-BSU40350"/>
<dbReference type="EnsemblBacteria" id="CAB16072">
    <property type="protein sequence ID" value="CAB16072"/>
    <property type="gene ID" value="BSU_40350"/>
</dbReference>
<dbReference type="GeneID" id="937769"/>
<dbReference type="KEGG" id="bsu:BSU40350"/>
<dbReference type="PATRIC" id="fig|224308.179.peg.4366"/>
<dbReference type="eggNOG" id="COG3829">
    <property type="taxonomic scope" value="Bacteria"/>
</dbReference>
<dbReference type="InParanoid" id="P38022"/>
<dbReference type="OrthoDB" id="9771372at2"/>
<dbReference type="PhylomeDB" id="P38022"/>
<dbReference type="BioCyc" id="BSUB:BSU40350-MONOMER"/>
<dbReference type="Proteomes" id="UP000001570">
    <property type="component" value="Chromosome"/>
</dbReference>
<dbReference type="GO" id="GO:0032993">
    <property type="term" value="C:protein-DNA complex"/>
    <property type="evidence" value="ECO:0000318"/>
    <property type="project" value="GO_Central"/>
</dbReference>
<dbReference type="GO" id="GO:0005524">
    <property type="term" value="F:ATP binding"/>
    <property type="evidence" value="ECO:0007669"/>
    <property type="project" value="UniProtKB-KW"/>
</dbReference>
<dbReference type="GO" id="GO:0016887">
    <property type="term" value="F:ATP hydrolysis activity"/>
    <property type="evidence" value="ECO:0007669"/>
    <property type="project" value="InterPro"/>
</dbReference>
<dbReference type="GO" id="GO:0000987">
    <property type="term" value="F:cis-regulatory region sequence-specific DNA binding"/>
    <property type="evidence" value="ECO:0000318"/>
    <property type="project" value="GO_Central"/>
</dbReference>
<dbReference type="GO" id="GO:0001216">
    <property type="term" value="F:DNA-binding transcription activator activity"/>
    <property type="evidence" value="ECO:0000318"/>
    <property type="project" value="GO_Central"/>
</dbReference>
<dbReference type="GO" id="GO:0006525">
    <property type="term" value="P:arginine metabolic process"/>
    <property type="evidence" value="ECO:0000314"/>
    <property type="project" value="UniProtKB"/>
</dbReference>
<dbReference type="GO" id="GO:0000160">
    <property type="term" value="P:phosphorelay signal transduction system"/>
    <property type="evidence" value="ECO:0007669"/>
    <property type="project" value="UniProtKB-KW"/>
</dbReference>
<dbReference type="GO" id="GO:0045893">
    <property type="term" value="P:positive regulation of DNA-templated transcription"/>
    <property type="evidence" value="ECO:0000318"/>
    <property type="project" value="GO_Central"/>
</dbReference>
<dbReference type="GO" id="GO:0006355">
    <property type="term" value="P:regulation of DNA-templated transcription"/>
    <property type="evidence" value="ECO:0000314"/>
    <property type="project" value="UniProtKB"/>
</dbReference>
<dbReference type="CDD" id="cd00009">
    <property type="entry name" value="AAA"/>
    <property type="match status" value="1"/>
</dbReference>
<dbReference type="FunFam" id="3.40.50.300:FF:000006">
    <property type="entry name" value="DNA-binding transcriptional regulator NtrC"/>
    <property type="match status" value="1"/>
</dbReference>
<dbReference type="FunFam" id="1.10.8.60:FF:000096">
    <property type="entry name" value="sigma-54-dependent Fis family transcriptional regulator"/>
    <property type="match status" value="1"/>
</dbReference>
<dbReference type="FunFam" id="3.30.450.20:FF:000082">
    <property type="entry name" value="sigma-54-dependent Fis family transcriptional regulator"/>
    <property type="match status" value="1"/>
</dbReference>
<dbReference type="Gene3D" id="1.10.8.60">
    <property type="match status" value="1"/>
</dbReference>
<dbReference type="Gene3D" id="1.10.10.60">
    <property type="entry name" value="Homeodomain-like"/>
    <property type="match status" value="1"/>
</dbReference>
<dbReference type="Gene3D" id="3.40.50.300">
    <property type="entry name" value="P-loop containing nucleotide triphosphate hydrolases"/>
    <property type="match status" value="1"/>
</dbReference>
<dbReference type="Gene3D" id="3.30.450.20">
    <property type="entry name" value="PAS domain"/>
    <property type="match status" value="1"/>
</dbReference>
<dbReference type="InterPro" id="IPR003593">
    <property type="entry name" value="AAA+_ATPase"/>
</dbReference>
<dbReference type="InterPro" id="IPR009057">
    <property type="entry name" value="Homeodomain-like_sf"/>
</dbReference>
<dbReference type="InterPro" id="IPR002197">
    <property type="entry name" value="HTH_Fis"/>
</dbReference>
<dbReference type="InterPro" id="IPR027417">
    <property type="entry name" value="P-loop_NTPase"/>
</dbReference>
<dbReference type="InterPro" id="IPR000014">
    <property type="entry name" value="PAS"/>
</dbReference>
<dbReference type="InterPro" id="IPR035965">
    <property type="entry name" value="PAS-like_dom_sf"/>
</dbReference>
<dbReference type="InterPro" id="IPR002078">
    <property type="entry name" value="Sigma_54_int"/>
</dbReference>
<dbReference type="InterPro" id="IPR025662">
    <property type="entry name" value="Sigma_54_int_dom_ATP-bd_1"/>
</dbReference>
<dbReference type="InterPro" id="IPR025943">
    <property type="entry name" value="Sigma_54_int_dom_ATP-bd_2"/>
</dbReference>
<dbReference type="InterPro" id="IPR025944">
    <property type="entry name" value="Sigma_54_int_dom_CS"/>
</dbReference>
<dbReference type="NCBIfam" id="TIGR00229">
    <property type="entry name" value="sensory_box"/>
    <property type="match status" value="1"/>
</dbReference>
<dbReference type="PANTHER" id="PTHR32071:SF74">
    <property type="entry name" value="TRANSCRIPTIONAL ACTIVATOR ROCR"/>
    <property type="match status" value="1"/>
</dbReference>
<dbReference type="PANTHER" id="PTHR32071">
    <property type="entry name" value="TRANSCRIPTIONAL REGULATORY PROTEIN"/>
    <property type="match status" value="1"/>
</dbReference>
<dbReference type="Pfam" id="PF02954">
    <property type="entry name" value="HTH_8"/>
    <property type="match status" value="1"/>
</dbReference>
<dbReference type="Pfam" id="PF13426">
    <property type="entry name" value="PAS_9"/>
    <property type="match status" value="1"/>
</dbReference>
<dbReference type="Pfam" id="PF00158">
    <property type="entry name" value="Sigma54_activat"/>
    <property type="match status" value="1"/>
</dbReference>
<dbReference type="PRINTS" id="PR01590">
    <property type="entry name" value="HTHFIS"/>
</dbReference>
<dbReference type="SMART" id="SM00382">
    <property type="entry name" value="AAA"/>
    <property type="match status" value="1"/>
</dbReference>
<dbReference type="SMART" id="SM00091">
    <property type="entry name" value="PAS"/>
    <property type="match status" value="1"/>
</dbReference>
<dbReference type="SUPFAM" id="SSF46689">
    <property type="entry name" value="Homeodomain-like"/>
    <property type="match status" value="1"/>
</dbReference>
<dbReference type="SUPFAM" id="SSF52540">
    <property type="entry name" value="P-loop containing nucleoside triphosphate hydrolases"/>
    <property type="match status" value="1"/>
</dbReference>
<dbReference type="SUPFAM" id="SSF55785">
    <property type="entry name" value="PYP-like sensor domain (PAS domain)"/>
    <property type="match status" value="1"/>
</dbReference>
<dbReference type="PROSITE" id="PS00675">
    <property type="entry name" value="SIGMA54_INTERACT_1"/>
    <property type="match status" value="1"/>
</dbReference>
<dbReference type="PROSITE" id="PS00676">
    <property type="entry name" value="SIGMA54_INTERACT_2"/>
    <property type="match status" value="1"/>
</dbReference>
<dbReference type="PROSITE" id="PS00688">
    <property type="entry name" value="SIGMA54_INTERACT_3"/>
    <property type="match status" value="1"/>
</dbReference>
<dbReference type="PROSITE" id="PS50045">
    <property type="entry name" value="SIGMA54_INTERACT_4"/>
    <property type="match status" value="1"/>
</dbReference>